<proteinExistence type="evidence at protein level"/>
<sequence>MNPGEMRPSACLLLLAGLQLSILVPTEANDFSSFLSANASLAVVVDHEYMTVHGENILAHFEKILSDVIRENLRNGGINVKYFSWNAVRLKKDFLAAITVTDCENTWNFYKNTQETSILLIAITDSDCPRLPLNRALMVPIVENGDEFPQLILDAKVQQILNWKTAVVFVDQTILEENALLVKSIVHESITNHITPISLILYEINDSLRGQQKRVALRQALSQFAPKKHEEMRQQFLVISAFHEDIIEIAETLNMFHVGNQWMIFVLDMVARDFDAGTVTINLDEGANIAFALNETDPNCQDSLNCTISEISLALVNAISKITVEEESIYGEISDEEWEAIRFTKQEKQAEILEYMKEFLKTNAKCSSCARWRVETAITWGKSQENRKFRSTPQRDAKNRNFEFINIGYWTPVLGFVCQELAFPHIEHHFRNITMDILTVHNPPWQILTKNSNGVIVEHKGIVMEIVKELSRALNFSYYLHEASAWKEEDSLSTSAGGNESDELVGSMTFRIPYRVVEMVQGNQFFIAAVAATVEDPDQKPFNYTQPISVQKYSFITRKPDEVSRIYLFTAPFTVETWFCLMGIILLTAPTLYAINRLAPLKEMRIVGLSTVKSCFWYIFGALLQQGGMYLPTADSGRLVVGFWWIVVIVLVTTYCGNLVAFLTFPKFQPGVDYLNQLEDHKDIVQYGLRNGTFFERYVQSTTREDFKHYLERAKIYGSAQEEDIEAVKRGERINIDWRINLQLIVQRHFEREKECHFALGRESFVDEQIAMIVPAQSAYLHLVNRHIKSMFRMGFIERWHQMNLPSAGKCNGKSAQRQVTNHKVNMDDMQGCFLVLLLGFTLALLIVCGEFWYRRFRASRKRRQFTN</sequence>
<accession>Q9VDH6</accession>
<accession>Q8IH81</accession>
<accession>Q8T0V7</accession>
<accession>Q9VDH7</accession>
<dbReference type="EMBL" id="AE014297">
    <property type="protein sequence ID" value="AAF55817.3"/>
    <property type="molecule type" value="Genomic_DNA"/>
</dbReference>
<dbReference type="EMBL" id="AY069028">
    <property type="protein sequence ID" value="AAL39173.1"/>
    <property type="molecule type" value="mRNA"/>
</dbReference>
<dbReference type="EMBL" id="BT001372">
    <property type="protein sequence ID" value="AAN71127.1"/>
    <property type="status" value="ALT_SEQ"/>
    <property type="molecule type" value="mRNA"/>
</dbReference>
<dbReference type="RefSeq" id="NP_650924.3">
    <property type="nucleotide sequence ID" value="NM_142667.3"/>
</dbReference>
<dbReference type="SMR" id="Q9VDH6"/>
<dbReference type="FunCoup" id="Q9VDH6">
    <property type="interactions" value="6"/>
</dbReference>
<dbReference type="IntAct" id="Q9VDH6">
    <property type="interactions" value="1"/>
</dbReference>
<dbReference type="STRING" id="7227.FBpp0307913"/>
<dbReference type="GlyCosmos" id="Q9VDH6">
    <property type="glycosylation" value="9 sites, No reported glycans"/>
</dbReference>
<dbReference type="GlyGen" id="Q9VDH6">
    <property type="glycosylation" value="9 sites"/>
</dbReference>
<dbReference type="PaxDb" id="7227-FBpp0288996"/>
<dbReference type="EnsemblMetazoa" id="FBtr0336970">
    <property type="protein sequence ID" value="FBpp0307913"/>
    <property type="gene ID" value="FBgn0259215"/>
</dbReference>
<dbReference type="GeneID" id="42471"/>
<dbReference type="KEGG" id="dme:Dmel_CG42315"/>
<dbReference type="UCSC" id="CG42315-RA">
    <property type="organism name" value="d. melanogaster"/>
</dbReference>
<dbReference type="AGR" id="FB:FBgn0259215"/>
<dbReference type="CTD" id="42471"/>
<dbReference type="FlyBase" id="FBgn0259215">
    <property type="gene designation" value="Ir93a"/>
</dbReference>
<dbReference type="VEuPathDB" id="VectorBase:FBgn0259215"/>
<dbReference type="eggNOG" id="KOG1052">
    <property type="taxonomic scope" value="Eukaryota"/>
</dbReference>
<dbReference type="GeneTree" id="ENSGT00930000152474"/>
<dbReference type="InParanoid" id="Q9VDH6"/>
<dbReference type="OMA" id="HIDRMFR"/>
<dbReference type="OrthoDB" id="5984008at2759"/>
<dbReference type="Reactome" id="R-DME-204005">
    <property type="pathway name" value="COPII-mediated vesicle transport"/>
</dbReference>
<dbReference type="Reactome" id="R-DME-399710">
    <property type="pathway name" value="Activation of AMPA receptors"/>
</dbReference>
<dbReference type="Reactome" id="R-DME-416993">
    <property type="pathway name" value="Trafficking of GluR2-containing AMPA receptors"/>
</dbReference>
<dbReference type="Reactome" id="R-DME-438066">
    <property type="pathway name" value="Unblocking of NMDA receptors, glutamate binding and activation"/>
</dbReference>
<dbReference type="Reactome" id="R-DME-5694530">
    <property type="pathway name" value="Cargo concentration in the ER"/>
</dbReference>
<dbReference type="Reactome" id="R-DME-8849932">
    <property type="pathway name" value="Synaptic adhesion-like molecules"/>
</dbReference>
<dbReference type="BioGRID-ORCS" id="42471">
    <property type="hits" value="0 hits in 1 CRISPR screen"/>
</dbReference>
<dbReference type="GenomeRNAi" id="42471"/>
<dbReference type="PRO" id="PR:Q9VDH6"/>
<dbReference type="Proteomes" id="UP000000803">
    <property type="component" value="Chromosome 3R"/>
</dbReference>
<dbReference type="Bgee" id="FBgn0259215">
    <property type="expression patterns" value="Expressed in neuron of aristal sensillum (Drosophila) in antenna and 8 other cell types or tissues"/>
</dbReference>
<dbReference type="GO" id="GO:0016020">
    <property type="term" value="C:membrane"/>
    <property type="evidence" value="ECO:0000255"/>
    <property type="project" value="FlyBase"/>
</dbReference>
<dbReference type="GO" id="GO:0005886">
    <property type="term" value="C:plasma membrane"/>
    <property type="evidence" value="ECO:0000318"/>
    <property type="project" value="GO_Central"/>
</dbReference>
<dbReference type="GO" id="GO:0098839">
    <property type="term" value="C:postsynaptic density membrane"/>
    <property type="evidence" value="ECO:0000318"/>
    <property type="project" value="GO_Central"/>
</dbReference>
<dbReference type="GO" id="GO:0008066">
    <property type="term" value="F:glutamate receptor activity"/>
    <property type="evidence" value="ECO:0000318"/>
    <property type="project" value="GO_Central"/>
</dbReference>
<dbReference type="GO" id="GO:0015276">
    <property type="term" value="F:ligand-gated monoatomic ion channel activity"/>
    <property type="evidence" value="ECO:0000255"/>
    <property type="project" value="FlyBase"/>
</dbReference>
<dbReference type="GO" id="GO:1904315">
    <property type="term" value="F:transmitter-gated monoatomic ion channel activity involved in regulation of postsynaptic membrane potential"/>
    <property type="evidence" value="ECO:0000318"/>
    <property type="project" value="GO_Central"/>
</dbReference>
<dbReference type="GO" id="GO:0050907">
    <property type="term" value="P:detection of chemical stimulus involved in sensory perception"/>
    <property type="evidence" value="ECO:0000270"/>
    <property type="project" value="FlyBase"/>
</dbReference>
<dbReference type="GO" id="GO:0050804">
    <property type="term" value="P:modulation of chemical synaptic transmission"/>
    <property type="evidence" value="ECO:0000318"/>
    <property type="project" value="GO_Central"/>
</dbReference>
<dbReference type="GO" id="GO:0035249">
    <property type="term" value="P:synaptic transmission, glutamatergic"/>
    <property type="evidence" value="ECO:0000318"/>
    <property type="project" value="GO_Central"/>
</dbReference>
<dbReference type="FunFam" id="1.10.287.70:FF:000169">
    <property type="entry name" value="Glutamate receptor ionotropic, delta-2"/>
    <property type="match status" value="1"/>
</dbReference>
<dbReference type="Gene3D" id="1.10.287.70">
    <property type="match status" value="1"/>
</dbReference>
<dbReference type="Gene3D" id="3.40.190.10">
    <property type="entry name" value="Periplasmic binding protein-like II"/>
    <property type="match status" value="1"/>
</dbReference>
<dbReference type="InterPro" id="IPR052192">
    <property type="entry name" value="Insect_Ionotropic_Sensory_Rcpt"/>
</dbReference>
<dbReference type="InterPro" id="IPR001320">
    <property type="entry name" value="Iontro_rcpt_C"/>
</dbReference>
<dbReference type="PANTHER" id="PTHR42643">
    <property type="entry name" value="IONOTROPIC RECEPTOR 20A-RELATED"/>
    <property type="match status" value="1"/>
</dbReference>
<dbReference type="PANTHER" id="PTHR42643:SF24">
    <property type="entry name" value="IONOTROPIC RECEPTOR 60A"/>
    <property type="match status" value="1"/>
</dbReference>
<dbReference type="Pfam" id="PF00060">
    <property type="entry name" value="Lig_chan"/>
    <property type="match status" value="1"/>
</dbReference>
<dbReference type="SUPFAM" id="SSF53850">
    <property type="entry name" value="Periplasmic binding protein-like II"/>
    <property type="match status" value="1"/>
</dbReference>
<evidence type="ECO:0000255" key="1"/>
<evidence type="ECO:0000255" key="2">
    <source>
        <dbReference type="PROSITE-ProRule" id="PRU00498"/>
    </source>
</evidence>
<evidence type="ECO:0000269" key="3">
    <source>
    </source>
</evidence>
<evidence type="ECO:0000269" key="4">
    <source>
    </source>
</evidence>
<evidence type="ECO:0000303" key="5">
    <source>
    </source>
</evidence>
<evidence type="ECO:0000305" key="6"/>
<evidence type="ECO:0000312" key="7">
    <source>
        <dbReference type="EMBL" id="AAL39173.1"/>
    </source>
</evidence>
<evidence type="ECO:0000312" key="8">
    <source>
        <dbReference type="EMBL" id="AAN71127.1"/>
    </source>
</evidence>
<evidence type="ECO:0000312" key="9">
    <source>
        <dbReference type="FlyBase" id="FBgn0259215"/>
    </source>
</evidence>
<evidence type="ECO:0000312" key="10">
    <source>
        <dbReference type="Proteomes" id="UP000000803"/>
    </source>
</evidence>
<keyword id="KW-0085">Behavior</keyword>
<keyword id="KW-1003">Cell membrane</keyword>
<keyword id="KW-0325">Glycoprotein</keyword>
<keyword id="KW-0407">Ion channel</keyword>
<keyword id="KW-0406">Ion transport</keyword>
<keyword id="KW-1071">Ligand-gated ion channel</keyword>
<keyword id="KW-0472">Membrane</keyword>
<keyword id="KW-0675">Receptor</keyword>
<keyword id="KW-1185">Reference proteome</keyword>
<keyword id="KW-0716">Sensory transduction</keyword>
<keyword id="KW-0732">Signal</keyword>
<keyword id="KW-0812">Transmembrane</keyword>
<keyword id="KW-1133">Transmembrane helix</keyword>
<keyword id="KW-0813">Transport</keyword>
<gene>
    <name evidence="5 9" type="primary">Ir93a</name>
    <name evidence="9" type="ORF">CG42315</name>
</gene>
<comment type="function">
    <text evidence="3 4">Integral part of various neural sensory systems in the antenna that provide the neural basis for the response to environmental changes in temperature (thermosensation) and humidity (hygrosensation) (PubMed:27161501, PubMed:27656904). Together with Ir21a and Ir25a, mediates the response of the larval dorsal organ cool cells, a trio of cool-responsive neurons, to cooling and is required for cool avoidance behavior (PubMed:27161501, PubMed:27656904). Together with Ir25a and Ir40a, mediates the response of the hydrosensory sacculus neurons to changes in relative humidity, and is required for dry detection and humidiy preference behavior (PubMed:27161501, PubMed:27656904).</text>
</comment>
<comment type="subcellular location">
    <subcellularLocation>
        <location evidence="6">Cell membrane</location>
        <topology evidence="1">Multi-pass membrane protein</topology>
    </subcellularLocation>
</comment>
<comment type="tissue specificity">
    <text evidence="4">In the antenna, detected in sacculus neurons which innervate the first and second chambers (at protein level) (PubMed:27656904). Expressed in multiple cells of the larval dorsal organ ganglion, including the dorsal organ cool cells where it is predominately localized to the dendritic bulbs (at protein level).</text>
</comment>
<comment type="disruption phenotype">
    <text evidence="3 4">Impaired response to environmental cues such as temperature and humidity (PubMed:27161501, PubMed:27656904). Response of dorsal organ cool cells to changes in temperature is abolished and consequently larvae fail to avoid cool temperatures (PubMed:27161501, PubMed:27656904). Response of sacculus neurons to changes in humidity is abolished and consequently larvae fail to move towards their preferred humidity (PubMed:27161501, PubMed:27656904).</text>
</comment>
<comment type="similarity">
    <text evidence="6">Belongs to the glutamate-gated ion channel (TC 1.A.10.1) family.</text>
</comment>
<comment type="sequence caution" evidence="6">
    <conflict type="miscellaneous discrepancy">
        <sequence resource="EMBL-CDS" id="AAN71127"/>
    </conflict>
    <text>Intron retention.</text>
</comment>
<reference evidence="10" key="1">
    <citation type="journal article" date="2000" name="Science">
        <title>The genome sequence of Drosophila melanogaster.</title>
        <authorList>
            <person name="Adams M.D."/>
            <person name="Celniker S.E."/>
            <person name="Holt R.A."/>
            <person name="Evans C.A."/>
            <person name="Gocayne J.D."/>
            <person name="Amanatides P.G."/>
            <person name="Scherer S.E."/>
            <person name="Li P.W."/>
            <person name="Hoskins R.A."/>
            <person name="Galle R.F."/>
            <person name="George R.A."/>
            <person name="Lewis S.E."/>
            <person name="Richards S."/>
            <person name="Ashburner M."/>
            <person name="Henderson S.N."/>
            <person name="Sutton G.G."/>
            <person name="Wortman J.R."/>
            <person name="Yandell M.D."/>
            <person name="Zhang Q."/>
            <person name="Chen L.X."/>
            <person name="Brandon R.C."/>
            <person name="Rogers Y.-H.C."/>
            <person name="Blazej R.G."/>
            <person name="Champe M."/>
            <person name="Pfeiffer B.D."/>
            <person name="Wan K.H."/>
            <person name="Doyle C."/>
            <person name="Baxter E.G."/>
            <person name="Helt G."/>
            <person name="Nelson C.R."/>
            <person name="Miklos G.L.G."/>
            <person name="Abril J.F."/>
            <person name="Agbayani A."/>
            <person name="An H.-J."/>
            <person name="Andrews-Pfannkoch C."/>
            <person name="Baldwin D."/>
            <person name="Ballew R.M."/>
            <person name="Basu A."/>
            <person name="Baxendale J."/>
            <person name="Bayraktaroglu L."/>
            <person name="Beasley E.M."/>
            <person name="Beeson K.Y."/>
            <person name="Benos P.V."/>
            <person name="Berman B.P."/>
            <person name="Bhandari D."/>
            <person name="Bolshakov S."/>
            <person name="Borkova D."/>
            <person name="Botchan M.R."/>
            <person name="Bouck J."/>
            <person name="Brokstein P."/>
            <person name="Brottier P."/>
            <person name="Burtis K.C."/>
            <person name="Busam D.A."/>
            <person name="Butler H."/>
            <person name="Cadieu E."/>
            <person name="Center A."/>
            <person name="Chandra I."/>
            <person name="Cherry J.M."/>
            <person name="Cawley S."/>
            <person name="Dahlke C."/>
            <person name="Davenport L.B."/>
            <person name="Davies P."/>
            <person name="de Pablos B."/>
            <person name="Delcher A."/>
            <person name="Deng Z."/>
            <person name="Mays A.D."/>
            <person name="Dew I."/>
            <person name="Dietz S.M."/>
            <person name="Dodson K."/>
            <person name="Doup L.E."/>
            <person name="Downes M."/>
            <person name="Dugan-Rocha S."/>
            <person name="Dunkov B.C."/>
            <person name="Dunn P."/>
            <person name="Durbin K.J."/>
            <person name="Evangelista C.C."/>
            <person name="Ferraz C."/>
            <person name="Ferriera S."/>
            <person name="Fleischmann W."/>
            <person name="Fosler C."/>
            <person name="Gabrielian A.E."/>
            <person name="Garg N.S."/>
            <person name="Gelbart W.M."/>
            <person name="Glasser K."/>
            <person name="Glodek A."/>
            <person name="Gong F."/>
            <person name="Gorrell J.H."/>
            <person name="Gu Z."/>
            <person name="Guan P."/>
            <person name="Harris M."/>
            <person name="Harris N.L."/>
            <person name="Harvey D.A."/>
            <person name="Heiman T.J."/>
            <person name="Hernandez J.R."/>
            <person name="Houck J."/>
            <person name="Hostin D."/>
            <person name="Houston K.A."/>
            <person name="Howland T.J."/>
            <person name="Wei M.-H."/>
            <person name="Ibegwam C."/>
            <person name="Jalali M."/>
            <person name="Kalush F."/>
            <person name="Karpen G.H."/>
            <person name="Ke Z."/>
            <person name="Kennison J.A."/>
            <person name="Ketchum K.A."/>
            <person name="Kimmel B.E."/>
            <person name="Kodira C.D."/>
            <person name="Kraft C.L."/>
            <person name="Kravitz S."/>
            <person name="Kulp D."/>
            <person name="Lai Z."/>
            <person name="Lasko P."/>
            <person name="Lei Y."/>
            <person name="Levitsky A.A."/>
            <person name="Li J.H."/>
            <person name="Li Z."/>
            <person name="Liang Y."/>
            <person name="Lin X."/>
            <person name="Liu X."/>
            <person name="Mattei B."/>
            <person name="McIntosh T.C."/>
            <person name="McLeod M.P."/>
            <person name="McPherson D."/>
            <person name="Merkulov G."/>
            <person name="Milshina N.V."/>
            <person name="Mobarry C."/>
            <person name="Morris J."/>
            <person name="Moshrefi A."/>
            <person name="Mount S.M."/>
            <person name="Moy M."/>
            <person name="Murphy B."/>
            <person name="Murphy L."/>
            <person name="Muzny D.M."/>
            <person name="Nelson D.L."/>
            <person name="Nelson D.R."/>
            <person name="Nelson K.A."/>
            <person name="Nixon K."/>
            <person name="Nusskern D.R."/>
            <person name="Pacleb J.M."/>
            <person name="Palazzolo M."/>
            <person name="Pittman G.S."/>
            <person name="Pan S."/>
            <person name="Pollard J."/>
            <person name="Puri V."/>
            <person name="Reese M.G."/>
            <person name="Reinert K."/>
            <person name="Remington K."/>
            <person name="Saunders R.D.C."/>
            <person name="Scheeler F."/>
            <person name="Shen H."/>
            <person name="Shue B.C."/>
            <person name="Siden-Kiamos I."/>
            <person name="Simpson M."/>
            <person name="Skupski M.P."/>
            <person name="Smith T.J."/>
            <person name="Spier E."/>
            <person name="Spradling A.C."/>
            <person name="Stapleton M."/>
            <person name="Strong R."/>
            <person name="Sun E."/>
            <person name="Svirskas R."/>
            <person name="Tector C."/>
            <person name="Turner R."/>
            <person name="Venter E."/>
            <person name="Wang A.H."/>
            <person name="Wang X."/>
            <person name="Wang Z.-Y."/>
            <person name="Wassarman D.A."/>
            <person name="Weinstock G.M."/>
            <person name="Weissenbach J."/>
            <person name="Williams S.M."/>
            <person name="Woodage T."/>
            <person name="Worley K.C."/>
            <person name="Wu D."/>
            <person name="Yang S."/>
            <person name="Yao Q.A."/>
            <person name="Ye J."/>
            <person name="Yeh R.-F."/>
            <person name="Zaveri J.S."/>
            <person name="Zhan M."/>
            <person name="Zhang G."/>
            <person name="Zhao Q."/>
            <person name="Zheng L."/>
            <person name="Zheng X.H."/>
            <person name="Zhong F.N."/>
            <person name="Zhong W."/>
            <person name="Zhou X."/>
            <person name="Zhu S.C."/>
            <person name="Zhu X."/>
            <person name="Smith H.O."/>
            <person name="Gibbs R.A."/>
            <person name="Myers E.W."/>
            <person name="Rubin G.M."/>
            <person name="Venter J.C."/>
        </authorList>
    </citation>
    <scope>NUCLEOTIDE SEQUENCE [LARGE SCALE GENOMIC DNA]</scope>
    <source>
        <strain evidence="10">Berkeley</strain>
    </source>
</reference>
<reference evidence="10" key="2">
    <citation type="journal article" date="2002" name="Genome Biol.">
        <title>Annotation of the Drosophila melanogaster euchromatic genome: a systematic review.</title>
        <authorList>
            <person name="Misra S."/>
            <person name="Crosby M.A."/>
            <person name="Mungall C.J."/>
            <person name="Matthews B.B."/>
            <person name="Campbell K.S."/>
            <person name="Hradecky P."/>
            <person name="Huang Y."/>
            <person name="Kaminker J.S."/>
            <person name="Millburn G.H."/>
            <person name="Prochnik S.E."/>
            <person name="Smith C.D."/>
            <person name="Tupy J.L."/>
            <person name="Whitfield E.J."/>
            <person name="Bayraktaroglu L."/>
            <person name="Berman B.P."/>
            <person name="Bettencourt B.R."/>
            <person name="Celniker S.E."/>
            <person name="de Grey A.D.N.J."/>
            <person name="Drysdale R.A."/>
            <person name="Harris N.L."/>
            <person name="Richter J."/>
            <person name="Russo S."/>
            <person name="Schroeder A.J."/>
            <person name="Shu S.Q."/>
            <person name="Stapleton M."/>
            <person name="Yamada C."/>
            <person name="Ashburner M."/>
            <person name="Gelbart W.M."/>
            <person name="Rubin G.M."/>
            <person name="Lewis S.E."/>
        </authorList>
    </citation>
    <scope>GENOME REANNOTATION</scope>
    <source>
        <strain evidence="10">Berkeley</strain>
    </source>
</reference>
<reference evidence="7 8" key="3">
    <citation type="journal article" date="2002" name="Genome Biol.">
        <title>A Drosophila full-length cDNA resource.</title>
        <authorList>
            <person name="Stapleton M."/>
            <person name="Carlson J.W."/>
            <person name="Brokstein P."/>
            <person name="Yu C."/>
            <person name="Champe M."/>
            <person name="George R.A."/>
            <person name="Guarin H."/>
            <person name="Kronmiller B."/>
            <person name="Pacleb J.M."/>
            <person name="Park S."/>
            <person name="Wan K.H."/>
            <person name="Rubin G.M."/>
            <person name="Celniker S.E."/>
        </authorList>
    </citation>
    <scope>NUCLEOTIDE SEQUENCE [LARGE SCALE MRNA] OF 232-868 AND 344-868</scope>
    <source>
        <strain>Berkeley</strain>
        <tissue>Head</tissue>
        <tissue>Testis</tissue>
    </source>
</reference>
<reference evidence="6" key="4">
    <citation type="journal article" date="2016" name="Curr. Biol.">
        <title>Humidity Sensing in Drosophila.</title>
        <authorList>
            <person name="Enjin A."/>
            <person name="Zaharieva E.E."/>
            <person name="Frank D.D."/>
            <person name="Mansourian S."/>
            <person name="Suh G.S."/>
            <person name="Gallio M."/>
            <person name="Stensmyr M.C."/>
        </authorList>
    </citation>
    <scope>FUNCTION</scope>
    <scope>DISRUPTION PHENOTYPE</scope>
</reference>
<reference evidence="6" key="5">
    <citation type="journal article" date="2016" name="Elife">
        <title>Distinct combinations of variant ionotropic glutamate receptors mediate thermosensation and hygrosensation in Drosophila.</title>
        <authorList>
            <person name="Knecht Z.A."/>
            <person name="Silbering A.F."/>
            <person name="Ni L."/>
            <person name="Klein M."/>
            <person name="Budelli G."/>
            <person name="Bell R."/>
            <person name="Abuin L."/>
            <person name="Ferrer A.J."/>
            <person name="Samuel A.D."/>
            <person name="Benton R."/>
            <person name="Garrity P.A."/>
        </authorList>
    </citation>
    <scope>FUNCTION</scope>
    <scope>TISSUE SPECIFICITY</scope>
    <scope>DISRUPTION PHENOTYPE</scope>
</reference>
<organism evidence="10">
    <name type="scientific">Drosophila melanogaster</name>
    <name type="common">Fruit fly</name>
    <dbReference type="NCBI Taxonomy" id="7227"/>
    <lineage>
        <taxon>Eukaryota</taxon>
        <taxon>Metazoa</taxon>
        <taxon>Ecdysozoa</taxon>
        <taxon>Arthropoda</taxon>
        <taxon>Hexapoda</taxon>
        <taxon>Insecta</taxon>
        <taxon>Pterygota</taxon>
        <taxon>Neoptera</taxon>
        <taxon>Endopterygota</taxon>
        <taxon>Diptera</taxon>
        <taxon>Brachycera</taxon>
        <taxon>Muscomorpha</taxon>
        <taxon>Ephydroidea</taxon>
        <taxon>Drosophilidae</taxon>
        <taxon>Drosophila</taxon>
        <taxon>Sophophora</taxon>
    </lineage>
</organism>
<protein>
    <recommendedName>
        <fullName evidence="5">Ionotropic receptor 93a</fullName>
    </recommendedName>
</protein>
<feature type="signal peptide" evidence="1">
    <location>
        <begin position="1"/>
        <end position="28"/>
    </location>
</feature>
<feature type="chain" id="PRO_5004334488" description="Ionotropic receptor 93a" evidence="1">
    <location>
        <begin position="29"/>
        <end position="868"/>
    </location>
</feature>
<feature type="topological domain" description="Extracellular" evidence="6">
    <location>
        <begin position="29"/>
        <end position="565"/>
    </location>
</feature>
<feature type="transmembrane region" description="Helical" evidence="1">
    <location>
        <begin position="566"/>
        <end position="586"/>
    </location>
</feature>
<feature type="topological domain" description="Cytoplasmic" evidence="6">
    <location>
        <begin position="587"/>
        <end position="642"/>
    </location>
</feature>
<feature type="transmembrane region" description="Helical" evidence="1">
    <location>
        <begin position="643"/>
        <end position="663"/>
    </location>
</feature>
<feature type="topological domain" description="Extracellular" evidence="6">
    <location>
        <begin position="664"/>
        <end position="832"/>
    </location>
</feature>
<feature type="transmembrane region" description="Helical" evidence="1">
    <location>
        <begin position="833"/>
        <end position="853"/>
    </location>
</feature>
<feature type="topological domain" description="Cytoplasmic" evidence="6">
    <location>
        <begin position="854"/>
        <end position="868"/>
    </location>
</feature>
<feature type="glycosylation site" description="N-linked (GlcNAc...) asparagine" evidence="2">
    <location>
        <position position="38"/>
    </location>
</feature>
<feature type="glycosylation site" description="N-linked (GlcNAc...) asparagine" evidence="2">
    <location>
        <position position="205"/>
    </location>
</feature>
<feature type="glycosylation site" description="N-linked (GlcNAc...) asparagine" evidence="2">
    <location>
        <position position="294"/>
    </location>
</feature>
<feature type="glycosylation site" description="N-linked (GlcNAc...) asparagine" evidence="2">
    <location>
        <position position="305"/>
    </location>
</feature>
<feature type="glycosylation site" description="N-linked (GlcNAc...) asparagine" evidence="2">
    <location>
        <position position="432"/>
    </location>
</feature>
<feature type="glycosylation site" description="N-linked (GlcNAc...) asparagine" evidence="2">
    <location>
        <position position="475"/>
    </location>
</feature>
<feature type="glycosylation site" description="N-linked (GlcNAc...) asparagine" evidence="2">
    <location>
        <position position="499"/>
    </location>
</feature>
<feature type="glycosylation site" description="N-linked (GlcNAc...) asparagine" evidence="2">
    <location>
        <position position="543"/>
    </location>
</feature>
<feature type="glycosylation site" description="N-linked (GlcNAc...) asparagine" evidence="2">
    <location>
        <position position="691"/>
    </location>
</feature>
<feature type="sequence conflict" description="In Ref. 3; AAN71127." evidence="6" ref="3">
    <original>T</original>
    <variation>A</variation>
    <location>
        <position position="494"/>
    </location>
</feature>
<feature type="sequence conflict" description="In Ref. 3; AAN71127." evidence="6" ref="3">
    <original>N</original>
    <variation>S</variation>
    <location>
        <position position="812"/>
    </location>
</feature>
<name>IR93A_DROME</name>